<protein>
    <recommendedName>
        <fullName>Leucine-specific-binding protein</fullName>
        <shortName>L-BP</shortName>
        <shortName>LS-BP</shortName>
    </recommendedName>
</protein>
<proteinExistence type="inferred from homology"/>
<feature type="signal peptide" evidence="1">
    <location>
        <begin position="1"/>
        <end position="23"/>
    </location>
</feature>
<feature type="chain" id="PRO_0000017703" description="Leucine-specific-binding protein">
    <location>
        <begin position="24"/>
        <end position="369"/>
    </location>
</feature>
<feature type="disulfide bond" evidence="1">
    <location>
        <begin position="76"/>
        <end position="101"/>
    </location>
</feature>
<name>LIVK_SALTI</name>
<organism>
    <name type="scientific">Salmonella typhi</name>
    <dbReference type="NCBI Taxonomy" id="90370"/>
    <lineage>
        <taxon>Bacteria</taxon>
        <taxon>Pseudomonadati</taxon>
        <taxon>Pseudomonadota</taxon>
        <taxon>Gammaproteobacteria</taxon>
        <taxon>Enterobacterales</taxon>
        <taxon>Enterobacteriaceae</taxon>
        <taxon>Salmonella</taxon>
    </lineage>
</organism>
<reference key="1">
    <citation type="journal article" date="2001" name="Nature">
        <title>Complete genome sequence of a multiple drug resistant Salmonella enterica serovar Typhi CT18.</title>
        <authorList>
            <person name="Parkhill J."/>
            <person name="Dougan G."/>
            <person name="James K.D."/>
            <person name="Thomson N.R."/>
            <person name="Pickard D."/>
            <person name="Wain J."/>
            <person name="Churcher C.M."/>
            <person name="Mungall K.L."/>
            <person name="Bentley S.D."/>
            <person name="Holden M.T.G."/>
            <person name="Sebaihia M."/>
            <person name="Baker S."/>
            <person name="Basham D."/>
            <person name="Brooks K."/>
            <person name="Chillingworth T."/>
            <person name="Connerton P."/>
            <person name="Cronin A."/>
            <person name="Davis P."/>
            <person name="Davies R.M."/>
            <person name="Dowd L."/>
            <person name="White N."/>
            <person name="Farrar J."/>
            <person name="Feltwell T."/>
            <person name="Hamlin N."/>
            <person name="Haque A."/>
            <person name="Hien T.T."/>
            <person name="Holroyd S."/>
            <person name="Jagels K."/>
            <person name="Krogh A."/>
            <person name="Larsen T.S."/>
            <person name="Leather S."/>
            <person name="Moule S."/>
            <person name="O'Gaora P."/>
            <person name="Parry C."/>
            <person name="Quail M.A."/>
            <person name="Rutherford K.M."/>
            <person name="Simmonds M."/>
            <person name="Skelton J."/>
            <person name="Stevens K."/>
            <person name="Whitehead S."/>
            <person name="Barrell B.G."/>
        </authorList>
    </citation>
    <scope>NUCLEOTIDE SEQUENCE [LARGE SCALE GENOMIC DNA]</scope>
    <source>
        <strain>CT18</strain>
    </source>
</reference>
<reference key="2">
    <citation type="journal article" date="2003" name="J. Bacteriol.">
        <title>Comparative genomics of Salmonella enterica serovar Typhi strains Ty2 and CT18.</title>
        <authorList>
            <person name="Deng W."/>
            <person name="Liou S.-R."/>
            <person name="Plunkett G. III"/>
            <person name="Mayhew G.F."/>
            <person name="Rose D.J."/>
            <person name="Burland V."/>
            <person name="Kodoyianni V."/>
            <person name="Schwartz D.C."/>
            <person name="Blattner F.R."/>
        </authorList>
    </citation>
    <scope>NUCLEOTIDE SEQUENCE [LARGE SCALE GENOMIC DNA]</scope>
    <source>
        <strain>ATCC 700931 / Ty2</strain>
    </source>
</reference>
<gene>
    <name type="primary">livK</name>
    <name type="synonym">livC</name>
    <name type="ordered locus">STY4248</name>
    <name type="ordered locus">t3958</name>
</gene>
<keyword id="KW-0029">Amino-acid transport</keyword>
<keyword id="KW-1015">Disulfide bond</keyword>
<keyword id="KW-0574">Periplasm</keyword>
<keyword id="KW-0732">Signal</keyword>
<keyword id="KW-0813">Transport</keyword>
<comment type="function">
    <text evidence="1">This protein is a component of the leucine-specific transport system, which is one of the two periplasmic binding protein-dependent transport systems of the high-affinity transport of the branched-chain amino acids.</text>
</comment>
<comment type="subcellular location">
    <subcellularLocation>
        <location evidence="1">Periplasm</location>
    </subcellularLocation>
</comment>
<comment type="similarity">
    <text evidence="2">Belongs to the leucine-binding protein family.</text>
</comment>
<sequence>MKRKAKTIIAGIVALAVSQGAMADDIKVAIVGAMSGPVAQWGDMEFNGARQAIKDINAKGGIKGDKLVGVEYDDACDPKQAVAVANKIVNDGIQYVIGHLCSSSTQPASDIYEDEGILMISPGATNPELTQRGYQYIMRTAGLDSSQGPTAAKYILETVKPQRIAIIHDKQQYGEGLARSVQDGLKQGNANIVFFDGITAGEKDFSALIARLQKENIDFVYYGGYYPEMGQMLRQARANGLKTQFMGPEGVGNASLSNIAGGAAEGMLVTMPKRYDQDPANKAIVEALKADKKDPSGPYVWITYAAVQSLATAMTRSASHAPLDLVKDLKANGADTVIGPLKWDEKGDLKGFEFGVFQWHADGSSTVAK</sequence>
<dbReference type="EMBL" id="AL513382">
    <property type="protein sequence ID" value="CAD08066.1"/>
    <property type="molecule type" value="Genomic_DNA"/>
</dbReference>
<dbReference type="EMBL" id="AE014613">
    <property type="protein sequence ID" value="AAO71428.1"/>
    <property type="molecule type" value="Genomic_DNA"/>
</dbReference>
<dbReference type="RefSeq" id="NP_458356.1">
    <property type="nucleotide sequence ID" value="NC_003198.1"/>
</dbReference>
<dbReference type="RefSeq" id="WP_000822976.1">
    <property type="nucleotide sequence ID" value="NZ_WSUR01000001.1"/>
</dbReference>
<dbReference type="SMR" id="P0A1W7"/>
<dbReference type="STRING" id="220341.gene:17588079"/>
<dbReference type="KEGG" id="stt:t3958"/>
<dbReference type="KEGG" id="sty:STY4248"/>
<dbReference type="PATRIC" id="fig|220341.7.peg.4338"/>
<dbReference type="eggNOG" id="COG0683">
    <property type="taxonomic scope" value="Bacteria"/>
</dbReference>
<dbReference type="HOGENOM" id="CLU_027128_6_0_6"/>
<dbReference type="OMA" id="GFVMAKF"/>
<dbReference type="OrthoDB" id="9768386at2"/>
<dbReference type="Proteomes" id="UP000000541">
    <property type="component" value="Chromosome"/>
</dbReference>
<dbReference type="Proteomes" id="UP000002670">
    <property type="component" value="Chromosome"/>
</dbReference>
<dbReference type="GO" id="GO:0042597">
    <property type="term" value="C:periplasmic space"/>
    <property type="evidence" value="ECO:0007669"/>
    <property type="project" value="UniProtKB-SubCell"/>
</dbReference>
<dbReference type="GO" id="GO:0006865">
    <property type="term" value="P:amino acid transport"/>
    <property type="evidence" value="ECO:0007669"/>
    <property type="project" value="UniProtKB-KW"/>
</dbReference>
<dbReference type="CDD" id="cd06342">
    <property type="entry name" value="PBP1_ABC_LIVBP-like"/>
    <property type="match status" value="1"/>
</dbReference>
<dbReference type="FunFam" id="3.40.50.2300:FF:000033">
    <property type="entry name" value="Amino acid ABC transporter substrate-binding protein"/>
    <property type="match status" value="1"/>
</dbReference>
<dbReference type="Gene3D" id="3.40.50.2300">
    <property type="match status" value="2"/>
</dbReference>
<dbReference type="InterPro" id="IPR028081">
    <property type="entry name" value="Leu-bd"/>
</dbReference>
<dbReference type="InterPro" id="IPR000709">
    <property type="entry name" value="Leu_Ile_Val-bd"/>
</dbReference>
<dbReference type="InterPro" id="IPR028082">
    <property type="entry name" value="Peripla_BP_I"/>
</dbReference>
<dbReference type="NCBIfam" id="NF011933">
    <property type="entry name" value="PRK15404.1"/>
    <property type="match status" value="1"/>
</dbReference>
<dbReference type="PANTHER" id="PTHR47151">
    <property type="entry name" value="LEU/ILE/VAL-BINDING ABC TRANSPORTER SUBUNIT"/>
    <property type="match status" value="1"/>
</dbReference>
<dbReference type="PANTHER" id="PTHR47151:SF3">
    <property type="entry name" value="LEUCINE-SPECIFIC-BINDING PROTEIN"/>
    <property type="match status" value="1"/>
</dbReference>
<dbReference type="Pfam" id="PF13458">
    <property type="entry name" value="Peripla_BP_6"/>
    <property type="match status" value="1"/>
</dbReference>
<dbReference type="PRINTS" id="PR00337">
    <property type="entry name" value="LEUILEVALBP"/>
</dbReference>
<dbReference type="SUPFAM" id="SSF53822">
    <property type="entry name" value="Periplasmic binding protein-like I"/>
    <property type="match status" value="1"/>
</dbReference>
<accession>P0A1W7</accession>
<accession>P17216</accession>
<evidence type="ECO:0000250" key="1"/>
<evidence type="ECO:0000305" key="2"/>